<comment type="cofactor">
    <cofactor evidence="1">
        <name>Zn(2+)</name>
        <dbReference type="ChEBI" id="CHEBI:29105"/>
    </cofactor>
    <text evidence="1">Binds 1 zinc ion per subunit.</text>
</comment>
<comment type="subunit">
    <text evidence="3">Component of the 40S small ribosomal subunit.</text>
</comment>
<comment type="subcellular location">
    <subcellularLocation>
        <location evidence="1">Cytoplasm</location>
        <location evidence="1">Cytosol</location>
    </subcellularLocation>
    <subcellularLocation>
        <location evidence="1">Cytoplasm</location>
    </subcellularLocation>
    <subcellularLocation>
        <location evidence="2">Rough endoplasmic reticulum</location>
    </subcellularLocation>
    <text evidence="1 2">Detected on cytosolic polysomes (By similarity). Detected in ribosomes that are associated with the rough endoplasmic reticulum (By similarity).</text>
</comment>
<comment type="similarity">
    <text evidence="5">Belongs to the universal ribosomal protein uS14 family.</text>
</comment>
<feature type="chain" id="PRO_0000268803" description="Small ribosomal subunit protein uS14">
    <location>
        <begin position="1"/>
        <end position="56"/>
    </location>
</feature>
<feature type="binding site" evidence="4">
    <location>
        <position position="21"/>
    </location>
    <ligand>
        <name>Zn(2+)</name>
        <dbReference type="ChEBI" id="CHEBI:29105"/>
    </ligand>
</feature>
<feature type="binding site" evidence="4">
    <location>
        <position position="24"/>
    </location>
    <ligand>
        <name>Zn(2+)</name>
        <dbReference type="ChEBI" id="CHEBI:29105"/>
    </ligand>
</feature>
<feature type="binding site" evidence="4">
    <location>
        <position position="39"/>
    </location>
    <ligand>
        <name>Zn(2+)</name>
        <dbReference type="ChEBI" id="CHEBI:29105"/>
    </ligand>
</feature>
<feature type="binding site" evidence="4">
    <location>
        <position position="42"/>
    </location>
    <ligand>
        <name>Zn(2+)</name>
        <dbReference type="ChEBI" id="CHEBI:29105"/>
    </ligand>
</feature>
<keyword id="KW-0963">Cytoplasm</keyword>
<keyword id="KW-0256">Endoplasmic reticulum</keyword>
<keyword id="KW-0479">Metal-binding</keyword>
<keyword id="KW-1185">Reference proteome</keyword>
<keyword id="KW-0687">Ribonucleoprotein</keyword>
<keyword id="KW-0689">Ribosomal protein</keyword>
<keyword id="KW-0862">Zinc</keyword>
<gene>
    <name type="primary">RpS29</name>
</gene>
<proteinExistence type="inferred from homology"/>
<organism>
    <name type="scientific">Bombyx mori</name>
    <name type="common">Silk moth</name>
    <dbReference type="NCBI Taxonomy" id="7091"/>
    <lineage>
        <taxon>Eukaryota</taxon>
        <taxon>Metazoa</taxon>
        <taxon>Ecdysozoa</taxon>
        <taxon>Arthropoda</taxon>
        <taxon>Hexapoda</taxon>
        <taxon>Insecta</taxon>
        <taxon>Pterygota</taxon>
        <taxon>Neoptera</taxon>
        <taxon>Endopterygota</taxon>
        <taxon>Lepidoptera</taxon>
        <taxon>Glossata</taxon>
        <taxon>Ditrysia</taxon>
        <taxon>Bombycoidea</taxon>
        <taxon>Bombycidae</taxon>
        <taxon>Bombycinae</taxon>
        <taxon>Bombyx</taxon>
    </lineage>
</organism>
<evidence type="ECO:0000250" key="1">
    <source>
        <dbReference type="UniProtKB" id="P62273"/>
    </source>
</evidence>
<evidence type="ECO:0000250" key="2">
    <source>
        <dbReference type="UniProtKB" id="Q6QAP6"/>
    </source>
</evidence>
<evidence type="ECO:0000250" key="3">
    <source>
        <dbReference type="UniProtKB" id="Q9VH69"/>
    </source>
</evidence>
<evidence type="ECO:0000255" key="4"/>
<evidence type="ECO:0000305" key="5"/>
<reference key="1">
    <citation type="submission" date="2004-09" db="EMBL/GenBank/DDBJ databases">
        <title>Ribosomal proteins of Bombyx mori.</title>
        <authorList>
            <person name="Heckel D.G."/>
            <person name="Morgan M."/>
            <person name="Shimada T."/>
            <person name="Mita K."/>
        </authorList>
    </citation>
    <scope>NUCLEOTIDE SEQUENCE [MRNA]</scope>
    <source>
        <strain>C108</strain>
    </source>
</reference>
<accession>Q5UAL3</accession>
<dbReference type="EMBL" id="AY769345">
    <property type="protein sequence ID" value="AAV34887.1"/>
    <property type="molecule type" value="mRNA"/>
</dbReference>
<dbReference type="RefSeq" id="NP_001037279.1">
    <property type="nucleotide sequence ID" value="NM_001043814.1"/>
</dbReference>
<dbReference type="SMR" id="Q5UAL3"/>
<dbReference type="FunCoup" id="Q5UAL3">
    <property type="interactions" value="904"/>
</dbReference>
<dbReference type="STRING" id="7091.Q5UAL3"/>
<dbReference type="PaxDb" id="7091-BGIBMGA004911-TA"/>
<dbReference type="EnsemblMetazoa" id="NM_001043814.1">
    <property type="protein sequence ID" value="NP_001037279.1"/>
    <property type="gene ID" value="GeneID_692725"/>
</dbReference>
<dbReference type="GeneID" id="692725"/>
<dbReference type="KEGG" id="bmor:692725"/>
<dbReference type="CTD" id="6235"/>
<dbReference type="eggNOG" id="KOG3506">
    <property type="taxonomic scope" value="Eukaryota"/>
</dbReference>
<dbReference type="HOGENOM" id="CLU_177289_1_1_1"/>
<dbReference type="InParanoid" id="Q5UAL3"/>
<dbReference type="OMA" id="HCFREIA"/>
<dbReference type="OrthoDB" id="109643at7088"/>
<dbReference type="Proteomes" id="UP000005204">
    <property type="component" value="Unassembled WGS sequence"/>
</dbReference>
<dbReference type="GO" id="GO:0022627">
    <property type="term" value="C:cytosolic small ribosomal subunit"/>
    <property type="evidence" value="ECO:0000250"/>
    <property type="project" value="UniProtKB"/>
</dbReference>
<dbReference type="GO" id="GO:0005840">
    <property type="term" value="C:ribosome"/>
    <property type="evidence" value="ECO:0000250"/>
    <property type="project" value="UniProtKB"/>
</dbReference>
<dbReference type="GO" id="GO:0005791">
    <property type="term" value="C:rough endoplasmic reticulum"/>
    <property type="evidence" value="ECO:0007669"/>
    <property type="project" value="UniProtKB-SubCell"/>
</dbReference>
<dbReference type="GO" id="GO:0003735">
    <property type="term" value="F:structural constituent of ribosome"/>
    <property type="evidence" value="ECO:0007669"/>
    <property type="project" value="InterPro"/>
</dbReference>
<dbReference type="GO" id="GO:0008270">
    <property type="term" value="F:zinc ion binding"/>
    <property type="evidence" value="ECO:0000250"/>
    <property type="project" value="UniProtKB"/>
</dbReference>
<dbReference type="GO" id="GO:0002181">
    <property type="term" value="P:cytoplasmic translation"/>
    <property type="evidence" value="ECO:0000250"/>
    <property type="project" value="UniProtKB"/>
</dbReference>
<dbReference type="FunFam" id="4.10.830.10:FF:000002">
    <property type="entry name" value="40S ribosomal protein S29"/>
    <property type="match status" value="1"/>
</dbReference>
<dbReference type="Gene3D" id="4.10.830.10">
    <property type="entry name" value="30s Ribosomal Protein S14, Chain N"/>
    <property type="match status" value="1"/>
</dbReference>
<dbReference type="InterPro" id="IPR001209">
    <property type="entry name" value="Ribosomal_uS14"/>
</dbReference>
<dbReference type="InterPro" id="IPR018271">
    <property type="entry name" value="Ribosomal_uS14_CS"/>
</dbReference>
<dbReference type="InterPro" id="IPR039744">
    <property type="entry name" value="RIbosomal_uS14_euk_arc"/>
</dbReference>
<dbReference type="InterPro" id="IPR043140">
    <property type="entry name" value="Ribosomal_uS14_sf"/>
</dbReference>
<dbReference type="NCBIfam" id="NF004424">
    <property type="entry name" value="PRK05766.1"/>
    <property type="match status" value="1"/>
</dbReference>
<dbReference type="PANTHER" id="PTHR12010">
    <property type="entry name" value="40S RIBOSOMAL PROTEIN S29"/>
    <property type="match status" value="1"/>
</dbReference>
<dbReference type="PANTHER" id="PTHR12010:SF2">
    <property type="entry name" value="40S RIBOSOMAL PROTEIN S29"/>
    <property type="match status" value="1"/>
</dbReference>
<dbReference type="Pfam" id="PF00253">
    <property type="entry name" value="Ribosomal_S14"/>
    <property type="match status" value="1"/>
</dbReference>
<dbReference type="PROSITE" id="PS00527">
    <property type="entry name" value="RIBOSOMAL_S14"/>
    <property type="match status" value="1"/>
</dbReference>
<sequence>MGHANIWYSHPRRYGQGSRSCRSCSNRHGLIRKYGLNICRQCFREYAHDIGFKKLD</sequence>
<protein>
    <recommendedName>
        <fullName evidence="5">Small ribosomal subunit protein uS14</fullName>
    </recommendedName>
    <alternativeName>
        <fullName>40S ribosomal protein S29</fullName>
    </alternativeName>
</protein>
<name>RS29_BOMMO</name>